<organism>
    <name type="scientific">Chlamydia felis (strain Fe/C-56)</name>
    <name type="common">Chlamydophila felis</name>
    <dbReference type="NCBI Taxonomy" id="264202"/>
    <lineage>
        <taxon>Bacteria</taxon>
        <taxon>Pseudomonadati</taxon>
        <taxon>Chlamydiota</taxon>
        <taxon>Chlamydiia</taxon>
        <taxon>Chlamydiales</taxon>
        <taxon>Chlamydiaceae</taxon>
        <taxon>Chlamydia/Chlamydophila group</taxon>
        <taxon>Chlamydia</taxon>
    </lineage>
</organism>
<protein>
    <recommendedName>
        <fullName evidence="1">LL-diaminopimelate aminotransferase</fullName>
        <shortName evidence="1">DAP-AT</shortName>
        <shortName evidence="1">DAP-aminotransferase</shortName>
        <shortName evidence="1">LL-DAP-aminotransferase</shortName>
        <ecNumber evidence="1">2.6.1.83</ecNumber>
    </recommendedName>
</protein>
<evidence type="ECO:0000255" key="1">
    <source>
        <dbReference type="HAMAP-Rule" id="MF_01642"/>
    </source>
</evidence>
<feature type="chain" id="PRO_0000342225" description="LL-diaminopimelate aminotransferase">
    <location>
        <begin position="1"/>
        <end position="398"/>
    </location>
</feature>
<feature type="binding site" evidence="1">
    <location>
        <position position="14"/>
    </location>
    <ligand>
        <name>substrate</name>
    </ligand>
</feature>
<feature type="binding site" evidence="1">
    <location>
        <position position="41"/>
    </location>
    <ligand>
        <name>substrate</name>
    </ligand>
</feature>
<feature type="binding site" evidence="1">
    <location>
        <position position="71"/>
    </location>
    <ligand>
        <name>pyridoxal 5'-phosphate</name>
        <dbReference type="ChEBI" id="CHEBI:597326"/>
    </ligand>
</feature>
<feature type="binding site" evidence="1">
    <location>
        <begin position="104"/>
        <end position="105"/>
    </location>
    <ligand>
        <name>pyridoxal 5'-phosphate</name>
        <dbReference type="ChEBI" id="CHEBI:597326"/>
    </ligand>
</feature>
<feature type="binding site" evidence="1">
    <location>
        <position position="105"/>
    </location>
    <ligand>
        <name>substrate</name>
    </ligand>
</feature>
<feature type="binding site" evidence="1">
    <location>
        <position position="128"/>
    </location>
    <ligand>
        <name>pyridoxal 5'-phosphate</name>
        <dbReference type="ChEBI" id="CHEBI:597326"/>
    </ligand>
</feature>
<feature type="binding site" evidence="1">
    <location>
        <position position="128"/>
    </location>
    <ligand>
        <name>substrate</name>
    </ligand>
</feature>
<feature type="binding site" evidence="1">
    <location>
        <position position="174"/>
    </location>
    <ligand>
        <name>pyridoxal 5'-phosphate</name>
        <dbReference type="ChEBI" id="CHEBI:597326"/>
    </ligand>
</feature>
<feature type="binding site" evidence="1">
    <location>
        <position position="174"/>
    </location>
    <ligand>
        <name>substrate</name>
    </ligand>
</feature>
<feature type="binding site" evidence="1">
    <location>
        <position position="205"/>
    </location>
    <ligand>
        <name>pyridoxal 5'-phosphate</name>
        <dbReference type="ChEBI" id="CHEBI:597326"/>
    </ligand>
</feature>
<feature type="binding site" evidence="1">
    <location>
        <begin position="233"/>
        <end position="235"/>
    </location>
    <ligand>
        <name>pyridoxal 5'-phosphate</name>
        <dbReference type="ChEBI" id="CHEBI:597326"/>
    </ligand>
</feature>
<feature type="binding site" evidence="1">
    <location>
        <position position="244"/>
    </location>
    <ligand>
        <name>pyridoxal 5'-phosphate</name>
        <dbReference type="ChEBI" id="CHEBI:597326"/>
    </ligand>
</feature>
<feature type="binding site" evidence="1">
    <location>
        <position position="275"/>
    </location>
    <ligand>
        <name>pyridoxal 5'-phosphate</name>
        <dbReference type="ChEBI" id="CHEBI:597326"/>
    </ligand>
</feature>
<feature type="binding site" evidence="1">
    <location>
        <position position="275"/>
    </location>
    <ligand>
        <name>substrate</name>
    </ligand>
</feature>
<feature type="binding site" evidence="1">
    <location>
        <position position="368"/>
    </location>
    <ligand>
        <name>substrate</name>
    </ligand>
</feature>
<feature type="modified residue" description="N6-(pyridoxal phosphate)lysine" evidence="1">
    <location>
        <position position="236"/>
    </location>
</feature>
<gene>
    <name evidence="1" type="primary">dapL</name>
    <name type="ordered locus">CF0757</name>
</gene>
<accession>Q253K9</accession>
<sequence>MRRNSNFSSLETNYLFSSIRQKIRSFREKHPEISIIDLSIGDTTQPLHASVIDTFSTSVRKLGNPKTYRGYGPELGLPALKEKLSEVCYRGKVSPEEIFISDGAKTDIFRLFSLFGPGKTIAVQDPSYPAYIDAAILAGARKIVKLPCTKETDFFPVIPQEENIDIFCLCSPNNPTGTVLNREQLKELIDYANSHGSIILFDAAYSAFISDPSLPTSIFEIPEARFCAIEINSFSKSLGFAGVRLGWNIVPKDLKYSDGSLIIRDWERFLCTTFNGASLPVQEAAIAGASLFPNLEAISKYRYNSSLLREALQKAEFVVHGGEHAPYLWVEVPSMIPDEDFFDFFLYQYHIAITPGKGFGSCGTGYVRFSSLGKSENIVAACQRLSQTSVYDRTVLSL</sequence>
<comment type="function">
    <text evidence="1">Involved in the synthesis of meso-diaminopimelate (m-DAP or DL-DAP), required for both lysine and peptidoglycan biosynthesis. Catalyzes the direct conversion of tetrahydrodipicolinate to LL-diaminopimelate.</text>
</comment>
<comment type="catalytic activity">
    <reaction evidence="1">
        <text>(2S,6S)-2,6-diaminopimelate + 2-oxoglutarate = (S)-2,3,4,5-tetrahydrodipicolinate + L-glutamate + H2O + H(+)</text>
        <dbReference type="Rhea" id="RHEA:23988"/>
        <dbReference type="ChEBI" id="CHEBI:15377"/>
        <dbReference type="ChEBI" id="CHEBI:15378"/>
        <dbReference type="ChEBI" id="CHEBI:16810"/>
        <dbReference type="ChEBI" id="CHEBI:16845"/>
        <dbReference type="ChEBI" id="CHEBI:29985"/>
        <dbReference type="ChEBI" id="CHEBI:57609"/>
        <dbReference type="EC" id="2.6.1.83"/>
    </reaction>
</comment>
<comment type="cofactor">
    <cofactor evidence="1">
        <name>pyridoxal 5'-phosphate</name>
        <dbReference type="ChEBI" id="CHEBI:597326"/>
    </cofactor>
</comment>
<comment type="pathway">
    <text evidence="1">Amino-acid biosynthesis; L-lysine biosynthesis via DAP pathway; LL-2,6-diaminopimelate from (S)-tetrahydrodipicolinate (aminotransferase route): step 1/1.</text>
</comment>
<comment type="subunit">
    <text evidence="1">Homodimer.</text>
</comment>
<comment type="similarity">
    <text evidence="1">Belongs to the class-I pyridoxal-phosphate-dependent aminotransferase family. LL-diaminopimelate aminotransferase subfamily.</text>
</comment>
<dbReference type="EC" id="2.6.1.83" evidence="1"/>
<dbReference type="EMBL" id="AP006861">
    <property type="protein sequence ID" value="BAE81529.1"/>
    <property type="molecule type" value="Genomic_DNA"/>
</dbReference>
<dbReference type="RefSeq" id="WP_011458307.1">
    <property type="nucleotide sequence ID" value="NC_007899.1"/>
</dbReference>
<dbReference type="SMR" id="Q253K9"/>
<dbReference type="STRING" id="264202.CF0757"/>
<dbReference type="KEGG" id="cfe:CF0757"/>
<dbReference type="eggNOG" id="COG0436">
    <property type="taxonomic scope" value="Bacteria"/>
</dbReference>
<dbReference type="HOGENOM" id="CLU_051433_0_0_0"/>
<dbReference type="OrthoDB" id="9813612at2"/>
<dbReference type="UniPathway" id="UPA00034">
    <property type="reaction ID" value="UER00466"/>
</dbReference>
<dbReference type="Proteomes" id="UP000001260">
    <property type="component" value="Chromosome"/>
</dbReference>
<dbReference type="GO" id="GO:0010285">
    <property type="term" value="F:L,L-diaminopimelate aminotransferase activity"/>
    <property type="evidence" value="ECO:0007669"/>
    <property type="project" value="UniProtKB-UniRule"/>
</dbReference>
<dbReference type="GO" id="GO:0030170">
    <property type="term" value="F:pyridoxal phosphate binding"/>
    <property type="evidence" value="ECO:0007669"/>
    <property type="project" value="UniProtKB-UniRule"/>
</dbReference>
<dbReference type="GO" id="GO:0033362">
    <property type="term" value="P:lysine biosynthetic process via diaminopimelate, diaminopimelate-aminotransferase pathway"/>
    <property type="evidence" value="ECO:0007669"/>
    <property type="project" value="UniProtKB-UniRule"/>
</dbReference>
<dbReference type="CDD" id="cd00609">
    <property type="entry name" value="AAT_like"/>
    <property type="match status" value="1"/>
</dbReference>
<dbReference type="FunFam" id="3.40.640.10:FF:000099">
    <property type="entry name" value="LL-diaminopimelate aminotransferase, chloroplastic"/>
    <property type="match status" value="1"/>
</dbReference>
<dbReference type="Gene3D" id="3.90.1150.10">
    <property type="entry name" value="Aspartate Aminotransferase, domain 1"/>
    <property type="match status" value="1"/>
</dbReference>
<dbReference type="Gene3D" id="3.40.640.10">
    <property type="entry name" value="Type I PLP-dependent aspartate aminotransferase-like (Major domain)"/>
    <property type="match status" value="1"/>
</dbReference>
<dbReference type="HAMAP" id="MF_01642">
    <property type="entry name" value="DapL_aminotrans_1"/>
    <property type="match status" value="1"/>
</dbReference>
<dbReference type="InterPro" id="IPR004839">
    <property type="entry name" value="Aminotransferase_I/II_large"/>
</dbReference>
<dbReference type="InterPro" id="IPR019942">
    <property type="entry name" value="DapL/ALD1"/>
</dbReference>
<dbReference type="InterPro" id="IPR015424">
    <property type="entry name" value="PyrdxlP-dep_Trfase"/>
</dbReference>
<dbReference type="InterPro" id="IPR015421">
    <property type="entry name" value="PyrdxlP-dep_Trfase_major"/>
</dbReference>
<dbReference type="InterPro" id="IPR015422">
    <property type="entry name" value="PyrdxlP-dep_Trfase_small"/>
</dbReference>
<dbReference type="NCBIfam" id="TIGR03542">
    <property type="entry name" value="DAPAT_plant"/>
    <property type="match status" value="1"/>
</dbReference>
<dbReference type="PANTHER" id="PTHR43144">
    <property type="entry name" value="AMINOTRANSFERASE"/>
    <property type="match status" value="1"/>
</dbReference>
<dbReference type="Pfam" id="PF00155">
    <property type="entry name" value="Aminotran_1_2"/>
    <property type="match status" value="1"/>
</dbReference>
<dbReference type="SUPFAM" id="SSF53383">
    <property type="entry name" value="PLP-dependent transferases"/>
    <property type="match status" value="1"/>
</dbReference>
<keyword id="KW-0032">Aminotransferase</keyword>
<keyword id="KW-0663">Pyridoxal phosphate</keyword>
<keyword id="KW-0808">Transferase</keyword>
<reference key="1">
    <citation type="journal article" date="2006" name="DNA Res.">
        <title>Genome sequence of the cat pathogen, Chlamydophila felis.</title>
        <authorList>
            <person name="Azuma Y."/>
            <person name="Hirakawa H."/>
            <person name="Yamashita A."/>
            <person name="Cai Y."/>
            <person name="Rahman M.A."/>
            <person name="Suzuki H."/>
            <person name="Mitaku S."/>
            <person name="Toh H."/>
            <person name="Goto S."/>
            <person name="Murakami T."/>
            <person name="Sugi K."/>
            <person name="Hayashi H."/>
            <person name="Fukushi H."/>
            <person name="Hattori M."/>
            <person name="Kuhara S."/>
            <person name="Shirai M."/>
        </authorList>
    </citation>
    <scope>NUCLEOTIDE SEQUENCE [LARGE SCALE GENOMIC DNA]</scope>
    <source>
        <strain>Fe/C-56</strain>
    </source>
</reference>
<proteinExistence type="inferred from homology"/>
<name>DAPAT_CHLFF</name>